<feature type="chain" id="PRO_0000192784" description="DNA endonuclease I-CvuI">
    <location>
        <begin position="1"/>
        <end position="161"/>
    </location>
</feature>
<feature type="helix" evidence="2">
    <location>
        <begin position="6"/>
        <end position="22"/>
    </location>
</feature>
<feature type="strand" evidence="2">
    <location>
        <begin position="23"/>
        <end position="31"/>
    </location>
</feature>
<feature type="strand" evidence="2">
    <location>
        <begin position="35"/>
        <end position="50"/>
    </location>
</feature>
<feature type="helix" evidence="2">
    <location>
        <begin position="51"/>
        <end position="54"/>
    </location>
</feature>
<feature type="helix" evidence="2">
    <location>
        <begin position="55"/>
        <end position="64"/>
    </location>
</feature>
<feature type="strand" evidence="2">
    <location>
        <begin position="68"/>
        <end position="71"/>
    </location>
</feature>
<feature type="strand" evidence="2">
    <location>
        <begin position="75"/>
        <end position="83"/>
    </location>
</feature>
<feature type="helix" evidence="2">
    <location>
        <begin position="84"/>
        <end position="94"/>
    </location>
</feature>
<feature type="turn" evidence="2">
    <location>
        <begin position="95"/>
        <end position="97"/>
    </location>
</feature>
<feature type="strand" evidence="2">
    <location>
        <begin position="99"/>
        <end position="101"/>
    </location>
</feature>
<feature type="helix" evidence="2">
    <location>
        <begin position="102"/>
        <end position="114"/>
    </location>
</feature>
<feature type="helix" evidence="2">
    <location>
        <begin position="115"/>
        <end position="117"/>
    </location>
</feature>
<feature type="helix" evidence="2">
    <location>
        <begin position="121"/>
        <end position="135"/>
    </location>
</feature>
<feature type="helix" evidence="2">
    <location>
        <begin position="147"/>
        <end position="156"/>
    </location>
</feature>
<name>DNE1_CHLVU</name>
<evidence type="ECO:0000305" key="1"/>
<evidence type="ECO:0007829" key="2">
    <source>
        <dbReference type="PDB" id="5A74"/>
    </source>
</evidence>
<keyword id="KW-0002">3D-structure</keyword>
<keyword id="KW-0150">Chloroplast</keyword>
<keyword id="KW-0255">Endonuclease</keyword>
<keyword id="KW-0378">Hydrolase</keyword>
<keyword id="KW-0404">Intron homing</keyword>
<keyword id="KW-0540">Nuclease</keyword>
<keyword id="KW-0934">Plastid</keyword>
<comment type="function">
    <text>Probable endonuclease involved in intron homing.</text>
</comment>
<comment type="subcellular location">
    <subcellularLocation>
        <location>Plastid</location>
        <location>Chloroplast</location>
    </subcellularLocation>
</comment>
<comment type="similarity">
    <text evidence="1">Belongs to the LAGLIDADG endonuclease family.</text>
</comment>
<proteinExistence type="evidence at protein level"/>
<sequence>MQPTNFHDQLKFAWLAGFVDADGCINAQIVSREDYLLKYQVRVSLTVFQSTTRHFILLDIQKILGCGTVRKRNDGMSEFCVVGGTSLQTTLEKLLPYLQLKRAQAKLVLQIIKKLPNTKDPSVLMEAALLADKVGLLTDGKKRTILAENVRECLKKLGHVV</sequence>
<dbReference type="EC" id="3.1.-.-"/>
<dbReference type="EMBL" id="AB001684">
    <property type="protein sequence ID" value="BAA57868.1"/>
    <property type="molecule type" value="Genomic_DNA"/>
</dbReference>
<dbReference type="PIR" id="T07221">
    <property type="entry name" value="T07221"/>
</dbReference>
<dbReference type="RefSeq" id="NP_045793.1">
    <property type="nucleotide sequence ID" value="NC_001865.1"/>
</dbReference>
<dbReference type="PDB" id="5A72">
    <property type="method" value="X-ray"/>
    <property type="resolution" value="2.60 A"/>
    <property type="chains" value="A/B=2-161"/>
</dbReference>
<dbReference type="PDB" id="5A74">
    <property type="method" value="X-ray"/>
    <property type="resolution" value="2.50 A"/>
    <property type="chains" value="A/B=2-161"/>
</dbReference>
<dbReference type="PDB" id="5A77">
    <property type="method" value="X-ray"/>
    <property type="resolution" value="2.50 A"/>
    <property type="chains" value="A/B=2-161"/>
</dbReference>
<dbReference type="PDB" id="5A78">
    <property type="method" value="X-ray"/>
    <property type="resolution" value="2.50 A"/>
    <property type="chains" value="A/B=2-161"/>
</dbReference>
<dbReference type="PDBsum" id="5A72"/>
<dbReference type="PDBsum" id="5A74"/>
<dbReference type="PDBsum" id="5A77"/>
<dbReference type="PDBsum" id="5A78"/>
<dbReference type="SMR" id="P56347"/>
<dbReference type="GeneID" id="809197"/>
<dbReference type="EvolutionaryTrace" id="P56347"/>
<dbReference type="GO" id="GO:0009507">
    <property type="term" value="C:chloroplast"/>
    <property type="evidence" value="ECO:0007669"/>
    <property type="project" value="UniProtKB-SubCell"/>
</dbReference>
<dbReference type="GO" id="GO:0004519">
    <property type="term" value="F:endonuclease activity"/>
    <property type="evidence" value="ECO:0007669"/>
    <property type="project" value="UniProtKB-KW"/>
</dbReference>
<dbReference type="GO" id="GO:0006314">
    <property type="term" value="P:intron homing"/>
    <property type="evidence" value="ECO:0007669"/>
    <property type="project" value="UniProtKB-KW"/>
</dbReference>
<dbReference type="Gene3D" id="3.10.28.10">
    <property type="entry name" value="Homing endonucleases"/>
    <property type="match status" value="1"/>
</dbReference>
<dbReference type="InterPro" id="IPR027434">
    <property type="entry name" value="Homing_endonucl"/>
</dbReference>
<dbReference type="InterPro" id="IPR004860">
    <property type="entry name" value="LAGLIDADG_dom"/>
</dbReference>
<dbReference type="Pfam" id="PF00961">
    <property type="entry name" value="LAGLIDADG_1"/>
    <property type="match status" value="1"/>
</dbReference>
<dbReference type="SUPFAM" id="SSF55608">
    <property type="entry name" value="Homing endonucleases"/>
    <property type="match status" value="1"/>
</dbReference>
<organism>
    <name type="scientific">Chlorella vulgaris</name>
    <name type="common">Green alga</name>
    <dbReference type="NCBI Taxonomy" id="3077"/>
    <lineage>
        <taxon>Eukaryota</taxon>
        <taxon>Viridiplantae</taxon>
        <taxon>Chlorophyta</taxon>
        <taxon>core chlorophytes</taxon>
        <taxon>Trebouxiophyceae</taxon>
        <taxon>Chlorellales</taxon>
        <taxon>Chlorellaceae</taxon>
        <taxon>Chlorella clade</taxon>
        <taxon>Chlorella</taxon>
    </lineage>
</organism>
<accession>P56347</accession>
<geneLocation type="chloroplast"/>
<reference key="1">
    <citation type="journal article" date="1997" name="Proc. Natl. Acad. Sci. U.S.A.">
        <title>Complete nucleotide sequence of the chloroplast genome from the green alga Chlorella vulgaris: the existence of genes possibly involved in chloroplast division.</title>
        <authorList>
            <person name="Wakasugi T."/>
            <person name="Nagai T."/>
            <person name="Kapoor M."/>
            <person name="Sugita M."/>
            <person name="Ito M."/>
            <person name="Ito S."/>
            <person name="Tsudzuki J."/>
            <person name="Nakashima K."/>
            <person name="Tsudzuki T."/>
            <person name="Suzuki Y."/>
            <person name="Hamada A."/>
            <person name="Ohta T."/>
            <person name="Inamura A."/>
            <person name="Yoshinaga K."/>
            <person name="Sugiura M."/>
        </authorList>
    </citation>
    <scope>NUCLEOTIDE SEQUENCE [LARGE SCALE GENOMIC DNA]</scope>
    <source>
        <strain>IAM C-27 / Tamiya</strain>
    </source>
</reference>
<protein>
    <recommendedName>
        <fullName>DNA endonuclease I-CvuI</fullName>
        <ecNumber>3.1.-.-</ecNumber>
    </recommendedName>
    <alternativeName>
        <fullName>23S rRNA intron protein</fullName>
    </alternativeName>
</protein>